<accession>Q4WMB6</accession>
<name>PPIL3_ASPFU</name>
<proteinExistence type="inferred from homology"/>
<feature type="chain" id="PRO_0000232968" description="Peptidyl-prolyl cis-trans isomerase-like 3">
    <location>
        <begin position="1"/>
        <end position="212"/>
    </location>
</feature>
<feature type="domain" description="PPIase cyclophilin-type" evidence="2">
    <location>
        <begin position="1"/>
        <end position="198"/>
    </location>
</feature>
<protein>
    <recommendedName>
        <fullName>Peptidyl-prolyl cis-trans isomerase-like 3</fullName>
        <shortName>PPIase</shortName>
        <ecNumber>5.2.1.8</ecNumber>
    </recommendedName>
    <alternativeName>
        <fullName>Rotamase</fullName>
    </alternativeName>
</protein>
<gene>
    <name type="primary">cyp10</name>
    <name type="ORF">AFUA_6G10480</name>
</gene>
<dbReference type="EC" id="5.2.1.8"/>
<dbReference type="EMBL" id="AAHF01000006">
    <property type="protein sequence ID" value="EAL88898.1"/>
    <property type="status" value="ALT_SEQ"/>
    <property type="molecule type" value="Genomic_DNA"/>
</dbReference>
<dbReference type="RefSeq" id="XP_750936.1">
    <property type="nucleotide sequence ID" value="XM_745843.1"/>
</dbReference>
<dbReference type="SMR" id="Q4WMB6"/>
<dbReference type="STRING" id="330879.Q4WMB6"/>
<dbReference type="GeneID" id="3508241"/>
<dbReference type="KEGG" id="afm:AFUA_6G10480"/>
<dbReference type="VEuPathDB" id="FungiDB:Afu6g10480"/>
<dbReference type="eggNOG" id="KOG0884">
    <property type="taxonomic scope" value="Eukaryota"/>
</dbReference>
<dbReference type="HOGENOM" id="CLU_012062_16_5_1"/>
<dbReference type="InParanoid" id="Q4WMB6"/>
<dbReference type="OrthoDB" id="271386at2759"/>
<dbReference type="Proteomes" id="UP000002530">
    <property type="component" value="Chromosome 6"/>
</dbReference>
<dbReference type="GO" id="GO:0071013">
    <property type="term" value="C:catalytic step 2 spliceosome"/>
    <property type="evidence" value="ECO:0000318"/>
    <property type="project" value="GO_Central"/>
</dbReference>
<dbReference type="GO" id="GO:0003755">
    <property type="term" value="F:peptidyl-prolyl cis-trans isomerase activity"/>
    <property type="evidence" value="ECO:0000318"/>
    <property type="project" value="GO_Central"/>
</dbReference>
<dbReference type="GO" id="GO:0006457">
    <property type="term" value="P:protein folding"/>
    <property type="evidence" value="ECO:0000318"/>
    <property type="project" value="GO_Central"/>
</dbReference>
<dbReference type="FunFam" id="2.40.100.10:FF:000041">
    <property type="entry name" value="Peptidyl-prolyl cis-trans isomerase"/>
    <property type="match status" value="1"/>
</dbReference>
<dbReference type="Gene3D" id="2.40.100.10">
    <property type="entry name" value="Cyclophilin-like"/>
    <property type="match status" value="1"/>
</dbReference>
<dbReference type="InterPro" id="IPR029000">
    <property type="entry name" value="Cyclophilin-like_dom_sf"/>
</dbReference>
<dbReference type="InterPro" id="IPR024936">
    <property type="entry name" value="Cyclophilin-type_PPIase"/>
</dbReference>
<dbReference type="InterPro" id="IPR002130">
    <property type="entry name" value="Cyclophilin-type_PPIase_dom"/>
</dbReference>
<dbReference type="InterPro" id="IPR044666">
    <property type="entry name" value="Cyclophilin_A-like"/>
</dbReference>
<dbReference type="PANTHER" id="PTHR45625:SF2">
    <property type="entry name" value="PEPTIDYL-PROLYL CIS-TRANS ISOMERASE-LIKE 3"/>
    <property type="match status" value="1"/>
</dbReference>
<dbReference type="PANTHER" id="PTHR45625">
    <property type="entry name" value="PEPTIDYL-PROLYL CIS-TRANS ISOMERASE-RELATED"/>
    <property type="match status" value="1"/>
</dbReference>
<dbReference type="Pfam" id="PF00160">
    <property type="entry name" value="Pro_isomerase"/>
    <property type="match status" value="1"/>
</dbReference>
<dbReference type="PIRSF" id="PIRSF001467">
    <property type="entry name" value="Peptidylpro_ismrse"/>
    <property type="match status" value="1"/>
</dbReference>
<dbReference type="PRINTS" id="PR00153">
    <property type="entry name" value="CSAPPISMRASE"/>
</dbReference>
<dbReference type="SUPFAM" id="SSF50891">
    <property type="entry name" value="Cyclophilin-like"/>
    <property type="match status" value="1"/>
</dbReference>
<dbReference type="PROSITE" id="PS50072">
    <property type="entry name" value="CSA_PPIASE_2"/>
    <property type="match status" value="1"/>
</dbReference>
<organism>
    <name type="scientific">Aspergillus fumigatus (strain ATCC MYA-4609 / CBS 101355 / FGSC A1100 / Af293)</name>
    <name type="common">Neosartorya fumigata</name>
    <dbReference type="NCBI Taxonomy" id="330879"/>
    <lineage>
        <taxon>Eukaryota</taxon>
        <taxon>Fungi</taxon>
        <taxon>Dikarya</taxon>
        <taxon>Ascomycota</taxon>
        <taxon>Pezizomycotina</taxon>
        <taxon>Eurotiomycetes</taxon>
        <taxon>Eurotiomycetidae</taxon>
        <taxon>Eurotiales</taxon>
        <taxon>Aspergillaceae</taxon>
        <taxon>Aspergillus</taxon>
        <taxon>Aspergillus subgen. Fumigati</taxon>
    </lineage>
</organism>
<keyword id="KW-0413">Isomerase</keyword>
<keyword id="KW-1185">Reference proteome</keyword>
<keyword id="KW-0697">Rotamase</keyword>
<sequence>MSVTLHTTHGDLKVELFCEAVPQTAENFLALCACGAYNNTPFHRIFPGFMIQGGDISLGPAPGTLNTLKPMLPVNEIPKGGTSIYHPRALNQEIHLPALRHNARGILSMASRPVKDRTAPGSQGATGATVNGSQFFITFAAAPHLDGASTVFGKVLNLSPQDEGGDVLSKLEKAKLKVDKKGRVTQPKEGEEGGYEAIGINSVTIHANPFAK</sequence>
<evidence type="ECO:0000250" key="1"/>
<evidence type="ECO:0000255" key="2">
    <source>
        <dbReference type="PROSITE-ProRule" id="PRU00156"/>
    </source>
</evidence>
<evidence type="ECO:0000305" key="3"/>
<reference key="1">
    <citation type="journal article" date="2005" name="Nature">
        <title>Genomic sequence of the pathogenic and allergenic filamentous fungus Aspergillus fumigatus.</title>
        <authorList>
            <person name="Nierman W.C."/>
            <person name="Pain A."/>
            <person name="Anderson M.J."/>
            <person name="Wortman J.R."/>
            <person name="Kim H.S."/>
            <person name="Arroyo J."/>
            <person name="Berriman M."/>
            <person name="Abe K."/>
            <person name="Archer D.B."/>
            <person name="Bermejo C."/>
            <person name="Bennett J.W."/>
            <person name="Bowyer P."/>
            <person name="Chen D."/>
            <person name="Collins M."/>
            <person name="Coulsen R."/>
            <person name="Davies R."/>
            <person name="Dyer P.S."/>
            <person name="Farman M.L."/>
            <person name="Fedorova N."/>
            <person name="Fedorova N.D."/>
            <person name="Feldblyum T.V."/>
            <person name="Fischer R."/>
            <person name="Fosker N."/>
            <person name="Fraser A."/>
            <person name="Garcia J.L."/>
            <person name="Garcia M.J."/>
            <person name="Goble A."/>
            <person name="Goldman G.H."/>
            <person name="Gomi K."/>
            <person name="Griffith-Jones S."/>
            <person name="Gwilliam R."/>
            <person name="Haas B.J."/>
            <person name="Haas H."/>
            <person name="Harris D.E."/>
            <person name="Horiuchi H."/>
            <person name="Huang J."/>
            <person name="Humphray S."/>
            <person name="Jimenez J."/>
            <person name="Keller N."/>
            <person name="Khouri H."/>
            <person name="Kitamoto K."/>
            <person name="Kobayashi T."/>
            <person name="Konzack S."/>
            <person name="Kulkarni R."/>
            <person name="Kumagai T."/>
            <person name="Lafton A."/>
            <person name="Latge J.-P."/>
            <person name="Li W."/>
            <person name="Lord A."/>
            <person name="Lu C."/>
            <person name="Majoros W.H."/>
            <person name="May G.S."/>
            <person name="Miller B.L."/>
            <person name="Mohamoud Y."/>
            <person name="Molina M."/>
            <person name="Monod M."/>
            <person name="Mouyna I."/>
            <person name="Mulligan S."/>
            <person name="Murphy L.D."/>
            <person name="O'Neil S."/>
            <person name="Paulsen I."/>
            <person name="Penalva M.A."/>
            <person name="Pertea M."/>
            <person name="Price C."/>
            <person name="Pritchard B.L."/>
            <person name="Quail M.A."/>
            <person name="Rabbinowitsch E."/>
            <person name="Rawlins N."/>
            <person name="Rajandream M.A."/>
            <person name="Reichard U."/>
            <person name="Renauld H."/>
            <person name="Robson G.D."/>
            <person name="Rodriguez de Cordoba S."/>
            <person name="Rodriguez-Pena J.M."/>
            <person name="Ronning C.M."/>
            <person name="Rutter S."/>
            <person name="Salzberg S.L."/>
            <person name="Sanchez M."/>
            <person name="Sanchez-Ferrero J.C."/>
            <person name="Saunders D."/>
            <person name="Seeger K."/>
            <person name="Squares R."/>
            <person name="Squares S."/>
            <person name="Takeuchi M."/>
            <person name="Tekaia F."/>
            <person name="Turner G."/>
            <person name="Vazquez de Aldana C.R."/>
            <person name="Weidman J."/>
            <person name="White O."/>
            <person name="Woodward J.R."/>
            <person name="Yu J.-H."/>
            <person name="Fraser C.M."/>
            <person name="Galagan J.E."/>
            <person name="Asai K."/>
            <person name="Machida M."/>
            <person name="Hall N."/>
            <person name="Barrell B.G."/>
            <person name="Denning D.W."/>
        </authorList>
    </citation>
    <scope>NUCLEOTIDE SEQUENCE [LARGE SCALE GENOMIC DNA]</scope>
    <source>
        <strain>ATCC MYA-4609 / CBS 101355 / FGSC A1100 / Af293</strain>
    </source>
</reference>
<reference key="2">
    <citation type="submission" date="2006-02" db="UniProtKB">
        <authorList>
            <person name="Pemberton T.J."/>
        </authorList>
    </citation>
    <scope>REVISION OF GENE MODEL</scope>
</reference>
<comment type="function">
    <text evidence="1">PPIases accelerate the folding of proteins. It catalyzes the cis-trans isomerization of proline imidic peptide bonds in oligopeptides (By similarity).</text>
</comment>
<comment type="catalytic activity">
    <reaction>
        <text>[protein]-peptidylproline (omega=180) = [protein]-peptidylproline (omega=0)</text>
        <dbReference type="Rhea" id="RHEA:16237"/>
        <dbReference type="Rhea" id="RHEA-COMP:10747"/>
        <dbReference type="Rhea" id="RHEA-COMP:10748"/>
        <dbReference type="ChEBI" id="CHEBI:83833"/>
        <dbReference type="ChEBI" id="CHEBI:83834"/>
        <dbReference type="EC" id="5.2.1.8"/>
    </reaction>
</comment>
<comment type="similarity">
    <text evidence="3">Belongs to the cyclophilin-type PPIase family. PPIL3 subfamily.</text>
</comment>
<comment type="sequence caution" evidence="3">
    <conflict type="erroneous gene model prediction">
        <sequence resource="EMBL-CDS" id="EAL88898"/>
    </conflict>
</comment>